<name>SYS_ANADE</name>
<keyword id="KW-0030">Aminoacyl-tRNA synthetase</keyword>
<keyword id="KW-0067">ATP-binding</keyword>
<keyword id="KW-0963">Cytoplasm</keyword>
<keyword id="KW-0436">Ligase</keyword>
<keyword id="KW-0547">Nucleotide-binding</keyword>
<keyword id="KW-0648">Protein biosynthesis</keyword>
<keyword id="KW-1185">Reference proteome</keyword>
<reference key="1">
    <citation type="submission" date="2006-01" db="EMBL/GenBank/DDBJ databases">
        <title>Complete sequence of Anaeromyxobacter dehalogenans 2CP-C.</title>
        <authorList>
            <person name="Copeland A."/>
            <person name="Lucas S."/>
            <person name="Lapidus A."/>
            <person name="Barry K."/>
            <person name="Detter J.C."/>
            <person name="Glavina T."/>
            <person name="Hammon N."/>
            <person name="Israni S."/>
            <person name="Pitluck S."/>
            <person name="Brettin T."/>
            <person name="Bruce D."/>
            <person name="Han C."/>
            <person name="Tapia R."/>
            <person name="Gilna P."/>
            <person name="Kiss H."/>
            <person name="Schmutz J."/>
            <person name="Larimer F."/>
            <person name="Land M."/>
            <person name="Kyrpides N."/>
            <person name="Anderson I."/>
            <person name="Sanford R.A."/>
            <person name="Ritalahti K.M."/>
            <person name="Thomas H.S."/>
            <person name="Kirby J.R."/>
            <person name="Zhulin I.B."/>
            <person name="Loeffler F.E."/>
            <person name="Richardson P."/>
        </authorList>
    </citation>
    <scope>NUCLEOTIDE SEQUENCE [LARGE SCALE GENOMIC DNA]</scope>
    <source>
        <strain>2CP-C</strain>
    </source>
</reference>
<protein>
    <recommendedName>
        <fullName evidence="1">Serine--tRNA ligase</fullName>
        <ecNumber evidence="1">6.1.1.11</ecNumber>
    </recommendedName>
    <alternativeName>
        <fullName evidence="1">Seryl-tRNA synthetase</fullName>
        <shortName evidence="1">SerRS</shortName>
    </alternativeName>
    <alternativeName>
        <fullName evidence="1">Seryl-tRNA(Ser/Sec) synthetase</fullName>
    </alternativeName>
</protein>
<organism>
    <name type="scientific">Anaeromyxobacter dehalogenans (strain 2CP-C)</name>
    <dbReference type="NCBI Taxonomy" id="290397"/>
    <lineage>
        <taxon>Bacteria</taxon>
        <taxon>Pseudomonadati</taxon>
        <taxon>Myxococcota</taxon>
        <taxon>Myxococcia</taxon>
        <taxon>Myxococcales</taxon>
        <taxon>Cystobacterineae</taxon>
        <taxon>Anaeromyxobacteraceae</taxon>
        <taxon>Anaeromyxobacter</taxon>
    </lineage>
</organism>
<sequence length="435" mass="48325">MLDLKAVAADFESFERRLARRGEGAVQALAPVKPLAARRRELNVLLEKQKKEQADANARIRELARTDKGAVEGARASLRALGDEVKKTEAELGEVEAELTRLLMLVPNPPHDSVPDGKDEHDNVVVKTWGEQKAYGFTPKPHWEVGEALGVLEWQQAAKLSGSRFTILKGAAARLERAIVSFFIDVHTSRGYTEILPPYLVTGETMTGTGQLPKFEEDLFKTTNEPPMYLIPTAEVPVTNMHRDEIFEASAMPVSYCAFSPCFRAEAGSAGRDTRGIMRQHQFHKVELVKLSKAEESYAEHEKMLDDACEVLRRLGLHHRVSLLCTGDMGFSSAKTYDIEVWCPGQGAYREISSVSNCEDFQARRIRVRYRGENGKPRLAHTLNGSGVAVGRTIVAILEQCQEADGTVVIPEPLRPYMGGLERIAAETFPRGVER</sequence>
<dbReference type="EC" id="6.1.1.11" evidence="1"/>
<dbReference type="EMBL" id="CP000251">
    <property type="protein sequence ID" value="ABC83619.1"/>
    <property type="molecule type" value="Genomic_DNA"/>
</dbReference>
<dbReference type="RefSeq" id="WP_011422901.1">
    <property type="nucleotide sequence ID" value="NC_007760.1"/>
</dbReference>
<dbReference type="SMR" id="Q2IGB1"/>
<dbReference type="STRING" id="290397.Adeh_3853"/>
<dbReference type="KEGG" id="ade:Adeh_3853"/>
<dbReference type="eggNOG" id="COG0172">
    <property type="taxonomic scope" value="Bacteria"/>
</dbReference>
<dbReference type="HOGENOM" id="CLU_023797_1_1_7"/>
<dbReference type="OrthoDB" id="9804647at2"/>
<dbReference type="UniPathway" id="UPA00906">
    <property type="reaction ID" value="UER00895"/>
</dbReference>
<dbReference type="Proteomes" id="UP000001935">
    <property type="component" value="Chromosome"/>
</dbReference>
<dbReference type="GO" id="GO:0005737">
    <property type="term" value="C:cytoplasm"/>
    <property type="evidence" value="ECO:0007669"/>
    <property type="project" value="UniProtKB-SubCell"/>
</dbReference>
<dbReference type="GO" id="GO:0005524">
    <property type="term" value="F:ATP binding"/>
    <property type="evidence" value="ECO:0007669"/>
    <property type="project" value="UniProtKB-UniRule"/>
</dbReference>
<dbReference type="GO" id="GO:0004828">
    <property type="term" value="F:serine-tRNA ligase activity"/>
    <property type="evidence" value="ECO:0007669"/>
    <property type="project" value="UniProtKB-UniRule"/>
</dbReference>
<dbReference type="GO" id="GO:0016260">
    <property type="term" value="P:selenocysteine biosynthetic process"/>
    <property type="evidence" value="ECO:0007669"/>
    <property type="project" value="UniProtKB-UniRule"/>
</dbReference>
<dbReference type="GO" id="GO:0006434">
    <property type="term" value="P:seryl-tRNA aminoacylation"/>
    <property type="evidence" value="ECO:0007669"/>
    <property type="project" value="UniProtKB-UniRule"/>
</dbReference>
<dbReference type="CDD" id="cd00770">
    <property type="entry name" value="SerRS_core"/>
    <property type="match status" value="1"/>
</dbReference>
<dbReference type="Gene3D" id="3.30.930.10">
    <property type="entry name" value="Bira Bifunctional Protein, Domain 2"/>
    <property type="match status" value="1"/>
</dbReference>
<dbReference type="Gene3D" id="1.10.287.40">
    <property type="entry name" value="Serine-tRNA synthetase, tRNA binding domain"/>
    <property type="match status" value="1"/>
</dbReference>
<dbReference type="HAMAP" id="MF_00176">
    <property type="entry name" value="Ser_tRNA_synth_type1"/>
    <property type="match status" value="1"/>
</dbReference>
<dbReference type="InterPro" id="IPR002314">
    <property type="entry name" value="aa-tRNA-synt_IIb"/>
</dbReference>
<dbReference type="InterPro" id="IPR006195">
    <property type="entry name" value="aa-tRNA-synth_II"/>
</dbReference>
<dbReference type="InterPro" id="IPR045864">
    <property type="entry name" value="aa-tRNA-synth_II/BPL/LPL"/>
</dbReference>
<dbReference type="InterPro" id="IPR002317">
    <property type="entry name" value="Ser-tRNA-ligase_type_1"/>
</dbReference>
<dbReference type="InterPro" id="IPR015866">
    <property type="entry name" value="Ser-tRNA-synth_1_N"/>
</dbReference>
<dbReference type="InterPro" id="IPR042103">
    <property type="entry name" value="SerRS_1_N_sf"/>
</dbReference>
<dbReference type="InterPro" id="IPR033729">
    <property type="entry name" value="SerRS_core"/>
</dbReference>
<dbReference type="InterPro" id="IPR010978">
    <property type="entry name" value="tRNA-bd_arm"/>
</dbReference>
<dbReference type="NCBIfam" id="TIGR00414">
    <property type="entry name" value="serS"/>
    <property type="match status" value="1"/>
</dbReference>
<dbReference type="PANTHER" id="PTHR43697:SF1">
    <property type="entry name" value="SERINE--TRNA LIGASE"/>
    <property type="match status" value="1"/>
</dbReference>
<dbReference type="PANTHER" id="PTHR43697">
    <property type="entry name" value="SERYL-TRNA SYNTHETASE"/>
    <property type="match status" value="1"/>
</dbReference>
<dbReference type="Pfam" id="PF02403">
    <property type="entry name" value="Seryl_tRNA_N"/>
    <property type="match status" value="1"/>
</dbReference>
<dbReference type="Pfam" id="PF00587">
    <property type="entry name" value="tRNA-synt_2b"/>
    <property type="match status" value="1"/>
</dbReference>
<dbReference type="PIRSF" id="PIRSF001529">
    <property type="entry name" value="Ser-tRNA-synth_IIa"/>
    <property type="match status" value="1"/>
</dbReference>
<dbReference type="PRINTS" id="PR00981">
    <property type="entry name" value="TRNASYNTHSER"/>
</dbReference>
<dbReference type="SUPFAM" id="SSF55681">
    <property type="entry name" value="Class II aaRS and biotin synthetases"/>
    <property type="match status" value="1"/>
</dbReference>
<dbReference type="SUPFAM" id="SSF46589">
    <property type="entry name" value="tRNA-binding arm"/>
    <property type="match status" value="1"/>
</dbReference>
<dbReference type="PROSITE" id="PS50862">
    <property type="entry name" value="AA_TRNA_LIGASE_II"/>
    <property type="match status" value="1"/>
</dbReference>
<accession>Q2IGB1</accession>
<comment type="function">
    <text evidence="1">Catalyzes the attachment of serine to tRNA(Ser). Is also able to aminoacylate tRNA(Sec) with serine, to form the misacylated tRNA L-seryl-tRNA(Sec), which will be further converted into selenocysteinyl-tRNA(Sec).</text>
</comment>
<comment type="catalytic activity">
    <reaction evidence="1">
        <text>tRNA(Ser) + L-serine + ATP = L-seryl-tRNA(Ser) + AMP + diphosphate + H(+)</text>
        <dbReference type="Rhea" id="RHEA:12292"/>
        <dbReference type="Rhea" id="RHEA-COMP:9669"/>
        <dbReference type="Rhea" id="RHEA-COMP:9703"/>
        <dbReference type="ChEBI" id="CHEBI:15378"/>
        <dbReference type="ChEBI" id="CHEBI:30616"/>
        <dbReference type="ChEBI" id="CHEBI:33019"/>
        <dbReference type="ChEBI" id="CHEBI:33384"/>
        <dbReference type="ChEBI" id="CHEBI:78442"/>
        <dbReference type="ChEBI" id="CHEBI:78533"/>
        <dbReference type="ChEBI" id="CHEBI:456215"/>
        <dbReference type="EC" id="6.1.1.11"/>
    </reaction>
</comment>
<comment type="catalytic activity">
    <reaction evidence="1">
        <text>tRNA(Sec) + L-serine + ATP = L-seryl-tRNA(Sec) + AMP + diphosphate + H(+)</text>
        <dbReference type="Rhea" id="RHEA:42580"/>
        <dbReference type="Rhea" id="RHEA-COMP:9742"/>
        <dbReference type="Rhea" id="RHEA-COMP:10128"/>
        <dbReference type="ChEBI" id="CHEBI:15378"/>
        <dbReference type="ChEBI" id="CHEBI:30616"/>
        <dbReference type="ChEBI" id="CHEBI:33019"/>
        <dbReference type="ChEBI" id="CHEBI:33384"/>
        <dbReference type="ChEBI" id="CHEBI:78442"/>
        <dbReference type="ChEBI" id="CHEBI:78533"/>
        <dbReference type="ChEBI" id="CHEBI:456215"/>
        <dbReference type="EC" id="6.1.1.11"/>
    </reaction>
</comment>
<comment type="pathway">
    <text evidence="1">Aminoacyl-tRNA biosynthesis; selenocysteinyl-tRNA(Sec) biosynthesis; L-seryl-tRNA(Sec) from L-serine and tRNA(Sec): step 1/1.</text>
</comment>
<comment type="subunit">
    <text evidence="1">Homodimer. The tRNA molecule binds across the dimer.</text>
</comment>
<comment type="subcellular location">
    <subcellularLocation>
        <location evidence="1">Cytoplasm</location>
    </subcellularLocation>
</comment>
<comment type="domain">
    <text evidence="1">Consists of two distinct domains, a catalytic core and a N-terminal extension that is involved in tRNA binding.</text>
</comment>
<comment type="similarity">
    <text evidence="1">Belongs to the class-II aminoacyl-tRNA synthetase family. Type-1 seryl-tRNA synthetase subfamily.</text>
</comment>
<proteinExistence type="inferred from homology"/>
<gene>
    <name evidence="1" type="primary">serS</name>
    <name type="ordered locus">Adeh_3853</name>
</gene>
<feature type="chain" id="PRO_1000019608" description="Serine--tRNA ligase">
    <location>
        <begin position="1"/>
        <end position="435"/>
    </location>
</feature>
<feature type="binding site" evidence="1">
    <location>
        <begin position="233"/>
        <end position="235"/>
    </location>
    <ligand>
        <name>L-serine</name>
        <dbReference type="ChEBI" id="CHEBI:33384"/>
    </ligand>
</feature>
<feature type="binding site" evidence="1">
    <location>
        <begin position="264"/>
        <end position="266"/>
    </location>
    <ligand>
        <name>ATP</name>
        <dbReference type="ChEBI" id="CHEBI:30616"/>
    </ligand>
</feature>
<feature type="binding site" evidence="1">
    <location>
        <position position="287"/>
    </location>
    <ligand>
        <name>L-serine</name>
        <dbReference type="ChEBI" id="CHEBI:33384"/>
    </ligand>
</feature>
<feature type="binding site" evidence="1">
    <location>
        <begin position="351"/>
        <end position="354"/>
    </location>
    <ligand>
        <name>ATP</name>
        <dbReference type="ChEBI" id="CHEBI:30616"/>
    </ligand>
</feature>
<feature type="binding site" evidence="1">
    <location>
        <position position="386"/>
    </location>
    <ligand>
        <name>L-serine</name>
        <dbReference type="ChEBI" id="CHEBI:33384"/>
    </ligand>
</feature>
<evidence type="ECO:0000255" key="1">
    <source>
        <dbReference type="HAMAP-Rule" id="MF_00176"/>
    </source>
</evidence>